<name>SYI_MYCBO</name>
<comment type="function">
    <text evidence="1">Catalyzes the attachment of isoleucine to tRNA(Ile). As IleRS can inadvertently accommodate and process structurally similar amino acids such as valine, to avoid such errors it has two additional distinct tRNA(Ile)-dependent editing activities. One activity is designated as 'pretransfer' editing and involves the hydrolysis of activated Val-AMP. The other activity is designated 'posttransfer' editing and involves deacylation of mischarged Val-tRNA(Ile).</text>
</comment>
<comment type="catalytic activity">
    <reaction evidence="1">
        <text>tRNA(Ile) + L-isoleucine + ATP = L-isoleucyl-tRNA(Ile) + AMP + diphosphate</text>
        <dbReference type="Rhea" id="RHEA:11060"/>
        <dbReference type="Rhea" id="RHEA-COMP:9666"/>
        <dbReference type="Rhea" id="RHEA-COMP:9695"/>
        <dbReference type="ChEBI" id="CHEBI:30616"/>
        <dbReference type="ChEBI" id="CHEBI:33019"/>
        <dbReference type="ChEBI" id="CHEBI:58045"/>
        <dbReference type="ChEBI" id="CHEBI:78442"/>
        <dbReference type="ChEBI" id="CHEBI:78528"/>
        <dbReference type="ChEBI" id="CHEBI:456215"/>
        <dbReference type="EC" id="6.1.1.5"/>
    </reaction>
</comment>
<comment type="cofactor">
    <cofactor evidence="1">
        <name>Zn(2+)</name>
        <dbReference type="ChEBI" id="CHEBI:29105"/>
    </cofactor>
</comment>
<comment type="subunit">
    <text evidence="1">Monomer.</text>
</comment>
<comment type="subcellular location">
    <subcellularLocation>
        <location evidence="1">Cytoplasm</location>
    </subcellularLocation>
</comment>
<comment type="domain">
    <text evidence="1">IleRS has two distinct active sites: one for aminoacylation and one for editing. The misactivated valine is translocated from the active site to the editing site, which sterically excludes the correctly activated isoleucine. The single editing site contains two valyl binding pockets, one specific for each substrate (Val-AMP or Val-tRNA(Ile)).</text>
</comment>
<comment type="similarity">
    <text evidence="1">Belongs to the class-I aminoacyl-tRNA synthetase family. IleS type 2 subfamily.</text>
</comment>
<sequence>MTDNAYPKLAGGAPDLPALELEVLDYWSRDDTFRASIARRDGAPEYVFYDGPPFANGLPHYGHLLTGYVKDIVPRYRTMRGYKVERRFGWDTHGLPAELEVERQLGITDKSQIEAMGIAAFNDACRASVLRYTDEWQAYVTRQARWVDFDNDYKTLDLAYMESVIWAFKQLWDKGLAYEGYRVLPYCWRDETPLSNHELRMDDDVYQSRQDPAVTVGFKVVGGQPDNGLDGAYLLVWTTTPWTLPSNLAVAVSPDITYVQVQAGDRRFVLAEARLAAYARELGEEPVVLGTYRGAELLGTRYLPPFAYFMDWPNAFQVLAGDFVTTDDGTGIVHMAPAYGEDDMVVAEAVGIAPVTPVDSKGRFDVTVADYQGQHVFDANAQIVRDLKTQSGPAAVNGPVLIRHETYEHPYPHCWRCRNPLIYRSVSSWFVRVTDFRDRMVELNQQITWYPEHVKDGQFGKWLQGARDWSISRNRYWGTPIPVWKSDDPAYPRIDVYGSLDELERDFGVRPANLHRPYIDELTRPNPDDPTGRSTMRRIPDVLDVWFDSGSMPYAQVHYPFENLDWFQGHYPGDFIVEYIGQTRGWFYTLHVLATALFDRPAFKTCVAHGIVLGFDGQKMSKSLRNYPDVTEVFDRDGSDAMRWFLMASPILRGGNLIVTEQGIRDGVRQVLLPLWNTYSFLALYAPKVGTWRVDSVHVLDRYILAKLAVLRDDLSESMEVYDIPGACEHLRQFTEALTNWYVRRSRSRFWAEDADAIDTLHTVLEVTTRLAAPLLPLITEIIWRGLTRERSVHLTDWPAPDLLPSDADLVAAMDQVRDVCSAASSLRKAKKLRVRLPLPKLIVAVENPQLLRPFVDLIGDELNVKQVELTDAIDTYGRFELTVNARVAGPRLGKDVQAAIKAVKAGDGVINPDGTLLAGPAVLTADEYNSRLVAADPESTAALPDGAGLVVLDGTVTAELEAEGWAKDRIRELQELRKSTGLDVSDRIRVVMSVPAEREDWARTHRDLIAGEILATDFEFADLADGVAIGDGVRVSIEKT</sequence>
<organism>
    <name type="scientific">Mycobacterium bovis (strain ATCC BAA-935 / AF2122/97)</name>
    <dbReference type="NCBI Taxonomy" id="233413"/>
    <lineage>
        <taxon>Bacteria</taxon>
        <taxon>Bacillati</taxon>
        <taxon>Actinomycetota</taxon>
        <taxon>Actinomycetes</taxon>
        <taxon>Mycobacteriales</taxon>
        <taxon>Mycobacteriaceae</taxon>
        <taxon>Mycobacterium</taxon>
        <taxon>Mycobacterium tuberculosis complex</taxon>
    </lineage>
</organism>
<evidence type="ECO:0000255" key="1">
    <source>
        <dbReference type="HAMAP-Rule" id="MF_02003"/>
    </source>
</evidence>
<reference key="1">
    <citation type="journal article" date="2003" name="Proc. Natl. Acad. Sci. U.S.A.">
        <title>The complete genome sequence of Mycobacterium bovis.</title>
        <authorList>
            <person name="Garnier T."/>
            <person name="Eiglmeier K."/>
            <person name="Camus J.-C."/>
            <person name="Medina N."/>
            <person name="Mansoor H."/>
            <person name="Pryor M."/>
            <person name="Duthoy S."/>
            <person name="Grondin S."/>
            <person name="Lacroix C."/>
            <person name="Monsempe C."/>
            <person name="Simon S."/>
            <person name="Harris B."/>
            <person name="Atkin R."/>
            <person name="Doggett J."/>
            <person name="Mayes R."/>
            <person name="Keating L."/>
            <person name="Wheeler P.R."/>
            <person name="Parkhill J."/>
            <person name="Barrell B.G."/>
            <person name="Cole S.T."/>
            <person name="Gordon S.V."/>
            <person name="Hewinson R.G."/>
        </authorList>
    </citation>
    <scope>NUCLEOTIDE SEQUENCE [LARGE SCALE GENOMIC DNA]</scope>
    <source>
        <strain>ATCC BAA-935 / AF2122/97</strain>
    </source>
</reference>
<reference key="2">
    <citation type="journal article" date="2017" name="Genome Announc.">
        <title>Updated reference genome sequence and annotation of Mycobacterium bovis AF2122/97.</title>
        <authorList>
            <person name="Malone K.M."/>
            <person name="Farrell D."/>
            <person name="Stuber T.P."/>
            <person name="Schubert O.T."/>
            <person name="Aebersold R."/>
            <person name="Robbe-Austerman S."/>
            <person name="Gordon S.V."/>
        </authorList>
    </citation>
    <scope>NUCLEOTIDE SEQUENCE [LARGE SCALE GENOMIC DNA]</scope>
    <scope>GENOME REANNOTATION</scope>
    <source>
        <strain>ATCC BAA-935 / AF2122/97</strain>
    </source>
</reference>
<protein>
    <recommendedName>
        <fullName evidence="1">Isoleucine--tRNA ligase</fullName>
        <ecNumber evidence="1">6.1.1.5</ecNumber>
    </recommendedName>
    <alternativeName>
        <fullName evidence="1">Isoleucyl-tRNA synthetase</fullName>
        <shortName evidence="1">IleRS</shortName>
    </alternativeName>
</protein>
<gene>
    <name evidence="1" type="primary">ileS</name>
    <name type="ordered locus">BQ2027_MB1563</name>
</gene>
<accession>Q7VEZ0</accession>
<accession>A0A1R3XZ02</accession>
<accession>X2BI93</accession>
<keyword id="KW-0030">Aminoacyl-tRNA synthetase</keyword>
<keyword id="KW-0067">ATP-binding</keyword>
<keyword id="KW-0963">Cytoplasm</keyword>
<keyword id="KW-0436">Ligase</keyword>
<keyword id="KW-0479">Metal-binding</keyword>
<keyword id="KW-0547">Nucleotide-binding</keyword>
<keyword id="KW-0648">Protein biosynthesis</keyword>
<keyword id="KW-1185">Reference proteome</keyword>
<keyword id="KW-0862">Zinc</keyword>
<dbReference type="EC" id="6.1.1.5" evidence="1"/>
<dbReference type="EMBL" id="LT708304">
    <property type="protein sequence ID" value="SIU00166.1"/>
    <property type="molecule type" value="Genomic_DNA"/>
</dbReference>
<dbReference type="RefSeq" id="NP_855215.1">
    <property type="nucleotide sequence ID" value="NC_002945.3"/>
</dbReference>
<dbReference type="RefSeq" id="WP_010950555.1">
    <property type="nucleotide sequence ID" value="NC_002945.4"/>
</dbReference>
<dbReference type="SMR" id="Q7VEZ0"/>
<dbReference type="KEGG" id="mbo:BQ2027_MB1563"/>
<dbReference type="PATRIC" id="fig|233413.5.peg.1709"/>
<dbReference type="Proteomes" id="UP000001419">
    <property type="component" value="Chromosome"/>
</dbReference>
<dbReference type="GO" id="GO:0005737">
    <property type="term" value="C:cytoplasm"/>
    <property type="evidence" value="ECO:0007669"/>
    <property type="project" value="UniProtKB-SubCell"/>
</dbReference>
<dbReference type="GO" id="GO:0002161">
    <property type="term" value="F:aminoacyl-tRNA deacylase activity"/>
    <property type="evidence" value="ECO:0007669"/>
    <property type="project" value="InterPro"/>
</dbReference>
<dbReference type="GO" id="GO:0005524">
    <property type="term" value="F:ATP binding"/>
    <property type="evidence" value="ECO:0007669"/>
    <property type="project" value="UniProtKB-UniRule"/>
</dbReference>
<dbReference type="GO" id="GO:0004822">
    <property type="term" value="F:isoleucine-tRNA ligase activity"/>
    <property type="evidence" value="ECO:0007669"/>
    <property type="project" value="UniProtKB-UniRule"/>
</dbReference>
<dbReference type="GO" id="GO:0000049">
    <property type="term" value="F:tRNA binding"/>
    <property type="evidence" value="ECO:0007669"/>
    <property type="project" value="InterPro"/>
</dbReference>
<dbReference type="GO" id="GO:0008270">
    <property type="term" value="F:zinc ion binding"/>
    <property type="evidence" value="ECO:0007669"/>
    <property type="project" value="UniProtKB-UniRule"/>
</dbReference>
<dbReference type="GO" id="GO:0006428">
    <property type="term" value="P:isoleucyl-tRNA aminoacylation"/>
    <property type="evidence" value="ECO:0007669"/>
    <property type="project" value="UniProtKB-UniRule"/>
</dbReference>
<dbReference type="CDD" id="cd07961">
    <property type="entry name" value="Anticodon_Ia_Ile_ABEc"/>
    <property type="match status" value="1"/>
</dbReference>
<dbReference type="CDD" id="cd00818">
    <property type="entry name" value="IleRS_core"/>
    <property type="match status" value="1"/>
</dbReference>
<dbReference type="FunFam" id="3.40.50.620:FF:000063">
    <property type="entry name" value="Isoleucine--tRNA ligase"/>
    <property type="match status" value="1"/>
</dbReference>
<dbReference type="FunFam" id="3.40.50.620:FF:000075">
    <property type="entry name" value="Isoleucine--tRNA ligase"/>
    <property type="match status" value="1"/>
</dbReference>
<dbReference type="Gene3D" id="3.40.50.620">
    <property type="entry name" value="HUPs"/>
    <property type="match status" value="2"/>
</dbReference>
<dbReference type="Gene3D" id="1.10.730.10">
    <property type="entry name" value="Isoleucyl-tRNA Synthetase, Domain 1"/>
    <property type="match status" value="1"/>
</dbReference>
<dbReference type="Gene3D" id="3.90.740.10">
    <property type="entry name" value="Valyl/Leucyl/Isoleucyl-tRNA synthetase, editing domain"/>
    <property type="match status" value="1"/>
</dbReference>
<dbReference type="HAMAP" id="MF_02003">
    <property type="entry name" value="Ile_tRNA_synth_type2"/>
    <property type="match status" value="1"/>
</dbReference>
<dbReference type="InterPro" id="IPR001412">
    <property type="entry name" value="aa-tRNA-synth_I_CS"/>
</dbReference>
<dbReference type="InterPro" id="IPR002300">
    <property type="entry name" value="aa-tRNA-synth_Ia"/>
</dbReference>
<dbReference type="InterPro" id="IPR033709">
    <property type="entry name" value="Anticodon_Ile_ABEc"/>
</dbReference>
<dbReference type="InterPro" id="IPR002301">
    <property type="entry name" value="Ile-tRNA-ligase"/>
</dbReference>
<dbReference type="InterPro" id="IPR023586">
    <property type="entry name" value="Ile-tRNA-ligase_type2"/>
</dbReference>
<dbReference type="InterPro" id="IPR013155">
    <property type="entry name" value="M/V/L/I-tRNA-synth_anticd-bd"/>
</dbReference>
<dbReference type="InterPro" id="IPR014729">
    <property type="entry name" value="Rossmann-like_a/b/a_fold"/>
</dbReference>
<dbReference type="InterPro" id="IPR009080">
    <property type="entry name" value="tRNAsynth_Ia_anticodon-bd"/>
</dbReference>
<dbReference type="InterPro" id="IPR009008">
    <property type="entry name" value="Val/Leu/Ile-tRNA-synth_edit"/>
</dbReference>
<dbReference type="NCBIfam" id="TIGR00392">
    <property type="entry name" value="ileS"/>
    <property type="match status" value="1"/>
</dbReference>
<dbReference type="PANTHER" id="PTHR42780:SF1">
    <property type="entry name" value="ISOLEUCINE--TRNA LIGASE, CYTOPLASMIC"/>
    <property type="match status" value="1"/>
</dbReference>
<dbReference type="PANTHER" id="PTHR42780">
    <property type="entry name" value="SOLEUCYL-TRNA SYNTHETASE"/>
    <property type="match status" value="1"/>
</dbReference>
<dbReference type="Pfam" id="PF08264">
    <property type="entry name" value="Anticodon_1"/>
    <property type="match status" value="1"/>
</dbReference>
<dbReference type="Pfam" id="PF19302">
    <property type="entry name" value="DUF5915"/>
    <property type="match status" value="1"/>
</dbReference>
<dbReference type="Pfam" id="PF00133">
    <property type="entry name" value="tRNA-synt_1"/>
    <property type="match status" value="1"/>
</dbReference>
<dbReference type="PRINTS" id="PR00984">
    <property type="entry name" value="TRNASYNTHILE"/>
</dbReference>
<dbReference type="SUPFAM" id="SSF47323">
    <property type="entry name" value="Anticodon-binding domain of a subclass of class I aminoacyl-tRNA synthetases"/>
    <property type="match status" value="1"/>
</dbReference>
<dbReference type="SUPFAM" id="SSF52374">
    <property type="entry name" value="Nucleotidylyl transferase"/>
    <property type="match status" value="1"/>
</dbReference>
<dbReference type="SUPFAM" id="SSF50677">
    <property type="entry name" value="ValRS/IleRS/LeuRS editing domain"/>
    <property type="match status" value="1"/>
</dbReference>
<dbReference type="PROSITE" id="PS00178">
    <property type="entry name" value="AA_TRNA_LIGASE_I"/>
    <property type="match status" value="1"/>
</dbReference>
<proteinExistence type="inferred from homology"/>
<feature type="chain" id="PRO_0000098547" description="Isoleucine--tRNA ligase">
    <location>
        <begin position="1"/>
        <end position="1041"/>
    </location>
</feature>
<feature type="short sequence motif" description="'HIGH' region">
    <location>
        <begin position="53"/>
        <end position="63"/>
    </location>
</feature>
<feature type="short sequence motif" description="'KMSKS' region">
    <location>
        <begin position="619"/>
        <end position="623"/>
    </location>
</feature>
<feature type="binding site" evidence="1">
    <location>
        <position position="622"/>
    </location>
    <ligand>
        <name>ATP</name>
        <dbReference type="ChEBI" id="CHEBI:30616"/>
    </ligand>
</feature>